<accession>Q828J2</accession>
<comment type="function">
    <text evidence="1">ATPase which is responsible for recognizing, binding, unfolding and translocation of pupylated proteins into the bacterial 20S proteasome core particle. May be essential for opening the gate of the 20S proteasome via an interaction with its C-terminus, thereby allowing substrate entry and access to the site of proteolysis. Thus, the C-termini of the proteasomal ATPase may function like a 'key in a lock' to induce gate opening and therefore regulate proteolysis.</text>
</comment>
<comment type="pathway">
    <text evidence="1">Protein degradation; proteasomal Pup-dependent pathway.</text>
</comment>
<comment type="subunit">
    <text evidence="1">Homohexamer. Assembles into a hexameric ring structure that caps the 20S proteasome core. Strongly interacts with the prokaryotic ubiquitin-like protein Pup through a hydrophobic interface; the interacting region of ARC lies in its N-terminal coiled-coil domain. There is one Pup binding site per ARC hexamer ring. Upon ATP-binding, the C-terminus of ARC interacts with the alpha-rings of the proteasome core, possibly by binding to the intersubunit pockets.</text>
</comment>
<comment type="domain">
    <text evidence="1">Consists of three main regions, an N-terminal coiled-coil domain that binds to protein Pup and functions as a docking station, an interdomain involved in ARC hexamerization, and a C-terminal ATPase domain of the AAA type.</text>
</comment>
<comment type="similarity">
    <text evidence="1">Belongs to the AAA ATPase family.</text>
</comment>
<proteinExistence type="inferred from homology"/>
<sequence length="588" mass="65179">MAAHDDDMNRGIRPGRGSDDPAGQIAYLEQEIAVLRRKLADSPRHTRILEERIVELQTNLAGVSAQNERLANTLREARDQIVALKEEVDRLAQPPAGFGVFLTANEDGTADIFTGGRKLRVNVSPSVELEELRRGQELMLNEALNVVEAMEYESVGDIVTLKEILEDGERALVVGHTDEERVVRLAEPLLDVTIRPGDALLLEPRSGYVYEVVPKSEVEELVLEEVPDIGYEQIGGLGNQIEMIRDAVELPYLYPDLFKEHELRPPKGVLLYGPPGCGKTLIAKAVANSLAKKVAEVTGQATGKSFFLNIKGPELLNKYVGETERQIRLVFQRAREKASEGTPVIVFFDEMESLFRTRGSGVSSDVENTIVPQLLAEIDGVEGLQNVVVIGASNREDMIDPAILRPGRLDVKIKIERPDAEAAKDIFGKYLTERLPLHTEDVGEHGGDRSATVHGMIQTAVEQMYAESEENRFLEVTYANGDKEVLYFKDFNSGAMIENIVGRAKKMAIKDFLEHSQKGLRVSHLLQACVDEFKENEDLPNTTNPDDWARISGKKGERIVYIRTLITGKQGADTGRSIDTVANTGQYL</sequence>
<feature type="chain" id="PRO_0000397022" description="Proteasome-associated ATPase">
    <location>
        <begin position="1"/>
        <end position="588"/>
    </location>
</feature>
<feature type="region of interest" description="Disordered" evidence="2">
    <location>
        <begin position="1"/>
        <end position="23"/>
    </location>
</feature>
<feature type="region of interest" description="Docks into pockets in the proteasome alpha-ring" evidence="1">
    <location>
        <begin position="587"/>
        <end position="588"/>
    </location>
</feature>
<feature type="coiled-coil region" evidence="1">
    <location>
        <begin position="47"/>
        <end position="94"/>
    </location>
</feature>
<feature type="compositionally biased region" description="Basic and acidic residues" evidence="2">
    <location>
        <begin position="1"/>
        <end position="10"/>
    </location>
</feature>
<feature type="binding site" evidence="1">
    <location>
        <begin position="276"/>
        <end position="281"/>
    </location>
    <ligand>
        <name>ATP</name>
        <dbReference type="ChEBI" id="CHEBI:30616"/>
    </ligand>
</feature>
<dbReference type="EMBL" id="BA000030">
    <property type="protein sequence ID" value="BAC74388.1"/>
    <property type="molecule type" value="Genomic_DNA"/>
</dbReference>
<dbReference type="RefSeq" id="WP_010988077.1">
    <property type="nucleotide sequence ID" value="NZ_JZJK01000082.1"/>
</dbReference>
<dbReference type="SMR" id="Q828J2"/>
<dbReference type="GeneID" id="41543748"/>
<dbReference type="KEGG" id="sma:SAVERM_6677"/>
<dbReference type="eggNOG" id="COG1222">
    <property type="taxonomic scope" value="Bacteria"/>
</dbReference>
<dbReference type="HOGENOM" id="CLU_036054_0_0_11"/>
<dbReference type="OrthoDB" id="9809379at2"/>
<dbReference type="UniPathway" id="UPA00997"/>
<dbReference type="Proteomes" id="UP000000428">
    <property type="component" value="Chromosome"/>
</dbReference>
<dbReference type="GO" id="GO:0000502">
    <property type="term" value="C:proteasome complex"/>
    <property type="evidence" value="ECO:0007669"/>
    <property type="project" value="UniProtKB-KW"/>
</dbReference>
<dbReference type="GO" id="GO:0005524">
    <property type="term" value="F:ATP binding"/>
    <property type="evidence" value="ECO:0007669"/>
    <property type="project" value="UniProtKB-UniRule"/>
</dbReference>
<dbReference type="GO" id="GO:0016887">
    <property type="term" value="F:ATP hydrolysis activity"/>
    <property type="evidence" value="ECO:0007669"/>
    <property type="project" value="UniProtKB-UniRule"/>
</dbReference>
<dbReference type="GO" id="GO:0019941">
    <property type="term" value="P:modification-dependent protein catabolic process"/>
    <property type="evidence" value="ECO:0007669"/>
    <property type="project" value="InterPro"/>
</dbReference>
<dbReference type="GO" id="GO:0010498">
    <property type="term" value="P:proteasomal protein catabolic process"/>
    <property type="evidence" value="ECO:0007669"/>
    <property type="project" value="InterPro"/>
</dbReference>
<dbReference type="FunFam" id="1.20.5.170:FF:000018">
    <property type="entry name" value="AAA ATPase forming ring-shaped complexes"/>
    <property type="match status" value="1"/>
</dbReference>
<dbReference type="FunFam" id="2.40.50.140:FF:000109">
    <property type="entry name" value="AAA ATPase forming ring-shaped complexes"/>
    <property type="match status" value="1"/>
</dbReference>
<dbReference type="FunFam" id="3.40.50.300:FF:000155">
    <property type="entry name" value="AAA ATPase forming ring-shaped complexes"/>
    <property type="match status" value="1"/>
</dbReference>
<dbReference type="Gene3D" id="1.10.8.60">
    <property type="match status" value="1"/>
</dbReference>
<dbReference type="Gene3D" id="1.20.5.170">
    <property type="match status" value="1"/>
</dbReference>
<dbReference type="Gene3D" id="2.40.50.140">
    <property type="entry name" value="Nucleic acid-binding proteins"/>
    <property type="match status" value="2"/>
</dbReference>
<dbReference type="Gene3D" id="3.40.50.300">
    <property type="entry name" value="P-loop containing nucleotide triphosphate hydrolases"/>
    <property type="match status" value="1"/>
</dbReference>
<dbReference type="HAMAP" id="MF_02112">
    <property type="entry name" value="ARC_ATPase"/>
    <property type="match status" value="1"/>
</dbReference>
<dbReference type="InterPro" id="IPR003593">
    <property type="entry name" value="AAA+_ATPase"/>
</dbReference>
<dbReference type="InterPro" id="IPR050168">
    <property type="entry name" value="AAA_ATPase_domain"/>
</dbReference>
<dbReference type="InterPro" id="IPR003959">
    <property type="entry name" value="ATPase_AAA_core"/>
</dbReference>
<dbReference type="InterPro" id="IPR003960">
    <property type="entry name" value="ATPase_AAA_CS"/>
</dbReference>
<dbReference type="InterPro" id="IPR012340">
    <property type="entry name" value="NA-bd_OB-fold"/>
</dbReference>
<dbReference type="InterPro" id="IPR027417">
    <property type="entry name" value="P-loop_NTPase"/>
</dbReference>
<dbReference type="InterPro" id="IPR032501">
    <property type="entry name" value="Prot_ATP_ID_OB_2nd"/>
</dbReference>
<dbReference type="InterPro" id="IPR041626">
    <property type="entry name" value="Prot_ATP_ID_OB_N"/>
</dbReference>
<dbReference type="InterPro" id="IPR022482">
    <property type="entry name" value="Proteasome_ATPase"/>
</dbReference>
<dbReference type="NCBIfam" id="TIGR03689">
    <property type="entry name" value="pup_AAA"/>
    <property type="match status" value="1"/>
</dbReference>
<dbReference type="PANTHER" id="PTHR23077">
    <property type="entry name" value="AAA-FAMILY ATPASE"/>
    <property type="match status" value="1"/>
</dbReference>
<dbReference type="PANTHER" id="PTHR23077:SF144">
    <property type="entry name" value="PROTEASOME-ASSOCIATED ATPASE"/>
    <property type="match status" value="1"/>
</dbReference>
<dbReference type="Pfam" id="PF00004">
    <property type="entry name" value="AAA"/>
    <property type="match status" value="1"/>
</dbReference>
<dbReference type="Pfam" id="PF16450">
    <property type="entry name" value="Prot_ATP_ID_OB_C"/>
    <property type="match status" value="1"/>
</dbReference>
<dbReference type="Pfam" id="PF17758">
    <property type="entry name" value="Prot_ATP_ID_OB_N"/>
    <property type="match status" value="1"/>
</dbReference>
<dbReference type="SMART" id="SM00382">
    <property type="entry name" value="AAA"/>
    <property type="match status" value="1"/>
</dbReference>
<dbReference type="SUPFAM" id="SSF52540">
    <property type="entry name" value="P-loop containing nucleoside triphosphate hydrolases"/>
    <property type="match status" value="1"/>
</dbReference>
<dbReference type="PROSITE" id="PS00674">
    <property type="entry name" value="AAA"/>
    <property type="match status" value="1"/>
</dbReference>
<organism>
    <name type="scientific">Streptomyces avermitilis (strain ATCC 31267 / DSM 46492 / JCM 5070 / NBRC 14893 / NCIMB 12804 / NRRL 8165 / MA-4680)</name>
    <dbReference type="NCBI Taxonomy" id="227882"/>
    <lineage>
        <taxon>Bacteria</taxon>
        <taxon>Bacillati</taxon>
        <taxon>Actinomycetota</taxon>
        <taxon>Actinomycetes</taxon>
        <taxon>Kitasatosporales</taxon>
        <taxon>Streptomycetaceae</taxon>
        <taxon>Streptomyces</taxon>
    </lineage>
</organism>
<evidence type="ECO:0000255" key="1">
    <source>
        <dbReference type="HAMAP-Rule" id="MF_02112"/>
    </source>
</evidence>
<evidence type="ECO:0000256" key="2">
    <source>
        <dbReference type="SAM" id="MobiDB-lite"/>
    </source>
</evidence>
<gene>
    <name evidence="1" type="primary">arc</name>
    <name type="ordered locus">SAV_6677</name>
</gene>
<name>ARC_STRAW</name>
<protein>
    <recommendedName>
        <fullName evidence="1">Proteasome-associated ATPase</fullName>
    </recommendedName>
    <alternativeName>
        <fullName evidence="1">AAA ATPase forming ring-shaped complexes</fullName>
        <shortName evidence="1">ARC</shortName>
    </alternativeName>
    <alternativeName>
        <fullName evidence="1">Proteasomal ATPase</fullName>
    </alternativeName>
</protein>
<reference key="1">
    <citation type="journal article" date="2001" name="Proc. Natl. Acad. Sci. U.S.A.">
        <title>Genome sequence of an industrial microorganism Streptomyces avermitilis: deducing the ability of producing secondary metabolites.</title>
        <authorList>
            <person name="Omura S."/>
            <person name="Ikeda H."/>
            <person name="Ishikawa J."/>
            <person name="Hanamoto A."/>
            <person name="Takahashi C."/>
            <person name="Shinose M."/>
            <person name="Takahashi Y."/>
            <person name="Horikawa H."/>
            <person name="Nakazawa H."/>
            <person name="Osonoe T."/>
            <person name="Kikuchi H."/>
            <person name="Shiba T."/>
            <person name="Sakaki Y."/>
            <person name="Hattori M."/>
        </authorList>
    </citation>
    <scope>NUCLEOTIDE SEQUENCE [LARGE SCALE GENOMIC DNA]</scope>
    <source>
        <strain>ATCC 31267 / DSM 46492 / JCM 5070 / NBRC 14893 / NCIMB 12804 / NRRL 8165 / MA-4680</strain>
    </source>
</reference>
<reference key="2">
    <citation type="journal article" date="2003" name="Nat. Biotechnol.">
        <title>Complete genome sequence and comparative analysis of the industrial microorganism Streptomyces avermitilis.</title>
        <authorList>
            <person name="Ikeda H."/>
            <person name="Ishikawa J."/>
            <person name="Hanamoto A."/>
            <person name="Shinose M."/>
            <person name="Kikuchi H."/>
            <person name="Shiba T."/>
            <person name="Sakaki Y."/>
            <person name="Hattori M."/>
            <person name="Omura S."/>
        </authorList>
    </citation>
    <scope>NUCLEOTIDE SEQUENCE [LARGE SCALE GENOMIC DNA]</scope>
    <source>
        <strain>ATCC 31267 / DSM 46492 / JCM 5070 / NBRC 14893 / NCIMB 12804 / NRRL 8165 / MA-4680</strain>
    </source>
</reference>
<keyword id="KW-0067">ATP-binding</keyword>
<keyword id="KW-0143">Chaperone</keyword>
<keyword id="KW-0175">Coiled coil</keyword>
<keyword id="KW-0547">Nucleotide-binding</keyword>
<keyword id="KW-0647">Proteasome</keyword>
<keyword id="KW-1185">Reference proteome</keyword>